<gene>
    <name type="primary">COB</name>
    <name type="synonym">CYTB</name>
</gene>
<dbReference type="EMBL" id="AF047029">
    <property type="protein sequence ID" value="AAC03553.1"/>
    <property type="molecule type" value="mRNA"/>
</dbReference>
<dbReference type="EMBL" id="AF004559">
    <property type="protein sequence ID" value="AAB95255.1"/>
    <property type="molecule type" value="Genomic_DNA"/>
</dbReference>
<dbReference type="SMR" id="O48334"/>
<dbReference type="GO" id="GO:0005743">
    <property type="term" value="C:mitochondrial inner membrane"/>
    <property type="evidence" value="ECO:0007669"/>
    <property type="project" value="UniProtKB-SubCell"/>
</dbReference>
<dbReference type="GO" id="GO:0045275">
    <property type="term" value="C:respiratory chain complex III"/>
    <property type="evidence" value="ECO:0007669"/>
    <property type="project" value="InterPro"/>
</dbReference>
<dbReference type="GO" id="GO:0046872">
    <property type="term" value="F:metal ion binding"/>
    <property type="evidence" value="ECO:0007669"/>
    <property type="project" value="UniProtKB-KW"/>
</dbReference>
<dbReference type="GO" id="GO:0008121">
    <property type="term" value="F:ubiquinol-cytochrome-c reductase activity"/>
    <property type="evidence" value="ECO:0007669"/>
    <property type="project" value="InterPro"/>
</dbReference>
<dbReference type="GO" id="GO:0006122">
    <property type="term" value="P:mitochondrial electron transport, ubiquinol to cytochrome c"/>
    <property type="evidence" value="ECO:0007669"/>
    <property type="project" value="TreeGrafter"/>
</dbReference>
<dbReference type="CDD" id="cd00290">
    <property type="entry name" value="cytochrome_b_C"/>
    <property type="match status" value="1"/>
</dbReference>
<dbReference type="CDD" id="cd00284">
    <property type="entry name" value="Cytochrome_b_N"/>
    <property type="match status" value="1"/>
</dbReference>
<dbReference type="FunFam" id="1.20.810.10:FF:000002">
    <property type="entry name" value="Cytochrome b"/>
    <property type="match status" value="1"/>
</dbReference>
<dbReference type="Gene3D" id="1.20.810.10">
    <property type="entry name" value="Cytochrome Bc1 Complex, Chain C"/>
    <property type="match status" value="1"/>
</dbReference>
<dbReference type="InterPro" id="IPR005798">
    <property type="entry name" value="Cyt_b/b6_C"/>
</dbReference>
<dbReference type="InterPro" id="IPR036150">
    <property type="entry name" value="Cyt_b/b6_C_sf"/>
</dbReference>
<dbReference type="InterPro" id="IPR005797">
    <property type="entry name" value="Cyt_b/b6_N"/>
</dbReference>
<dbReference type="InterPro" id="IPR027387">
    <property type="entry name" value="Cytb/b6-like_sf"/>
</dbReference>
<dbReference type="InterPro" id="IPR030689">
    <property type="entry name" value="Cytochrome_b"/>
</dbReference>
<dbReference type="InterPro" id="IPR048260">
    <property type="entry name" value="Cytochrome_b_C_euk/bac"/>
</dbReference>
<dbReference type="InterPro" id="IPR048259">
    <property type="entry name" value="Cytochrome_b_N_euk/bac"/>
</dbReference>
<dbReference type="InterPro" id="IPR016174">
    <property type="entry name" value="Di-haem_cyt_TM"/>
</dbReference>
<dbReference type="PANTHER" id="PTHR19271">
    <property type="entry name" value="CYTOCHROME B"/>
    <property type="match status" value="1"/>
</dbReference>
<dbReference type="PANTHER" id="PTHR19271:SF16">
    <property type="entry name" value="CYTOCHROME B"/>
    <property type="match status" value="1"/>
</dbReference>
<dbReference type="Pfam" id="PF00032">
    <property type="entry name" value="Cytochrom_B_C"/>
    <property type="match status" value="1"/>
</dbReference>
<dbReference type="Pfam" id="PF00033">
    <property type="entry name" value="Cytochrome_B"/>
    <property type="match status" value="1"/>
</dbReference>
<dbReference type="PIRSF" id="PIRSF038885">
    <property type="entry name" value="COB"/>
    <property type="match status" value="1"/>
</dbReference>
<dbReference type="SUPFAM" id="SSF81648">
    <property type="entry name" value="a domain/subunit of cytochrome bc1 complex (Ubiquinol-cytochrome c reductase)"/>
    <property type="match status" value="1"/>
</dbReference>
<dbReference type="SUPFAM" id="SSF81342">
    <property type="entry name" value="Transmembrane di-heme cytochromes"/>
    <property type="match status" value="1"/>
</dbReference>
<dbReference type="PROSITE" id="PS51003">
    <property type="entry name" value="CYTB_CTER"/>
    <property type="match status" value="1"/>
</dbReference>
<dbReference type="PROSITE" id="PS51002">
    <property type="entry name" value="CYTB_NTER"/>
    <property type="match status" value="1"/>
</dbReference>
<proteinExistence type="evidence at transcript level"/>
<comment type="function">
    <text evidence="3">Component of the ubiquinol-cytochrome c reductase complex (complex III or cytochrome b-c1 complex) that is part of the mitochondrial respiratory chain. The b-c1 complex mediates electron transfer from ubiquinol to cytochrome c. Contributes to the generation of a proton gradient across the mitochondrial membrane that is then used for ATP synthesis.</text>
</comment>
<comment type="cofactor">
    <cofactor evidence="3">
        <name>heme b</name>
        <dbReference type="ChEBI" id="CHEBI:60344"/>
    </cofactor>
    <text evidence="3">Binds 2 heme b groups non-covalently.</text>
</comment>
<comment type="subunit">
    <text evidence="3">Fungal cytochrome b-c1 complex contains 10 subunits; 3 respiratory subunits, 2 core proteins and 5 low-molecular weight proteins. Cytochrome b-c1 complex is a homodimer.</text>
</comment>
<comment type="subcellular location">
    <subcellularLocation>
        <location evidence="3">Mitochondrion inner membrane</location>
        <topology evidence="3">Multi-pass membrane protein</topology>
    </subcellularLocation>
</comment>
<comment type="miscellaneous">
    <text evidence="1">Heme 1 (or BL or b562) is low-potential and absorbs at about 562 nm, and heme 2 (or BH or b566) is high-potential and absorbs at about 566 nm.</text>
</comment>
<comment type="similarity">
    <text evidence="4 5">Belongs to the cytochrome b family.</text>
</comment>
<comment type="caution">
    <text evidence="3">The protein contains only eight transmembrane helices, not nine as predicted by bioinformatics tools.</text>
</comment>
<geneLocation type="mitochondrion"/>
<name>CYB_VENIN</name>
<keyword id="KW-0249">Electron transport</keyword>
<keyword id="KW-0349">Heme</keyword>
<keyword id="KW-0408">Iron</keyword>
<keyword id="KW-0472">Membrane</keyword>
<keyword id="KW-0479">Metal-binding</keyword>
<keyword id="KW-0496">Mitochondrion</keyword>
<keyword id="KW-0999">Mitochondrion inner membrane</keyword>
<keyword id="KW-0679">Respiratory chain</keyword>
<keyword id="KW-0812">Transmembrane</keyword>
<keyword id="KW-1133">Transmembrane helix</keyword>
<keyword id="KW-0813">Transport</keyword>
<keyword id="KW-0830">Ubiquinone</keyword>
<sequence>MRILKSHPLLRLANSYIIDSPQPSNISYLWNFGSLLAFCLVIQIITGVTLAMHYNPSVLEAFNSVEHIMRDVNNGWLIRYLHANTASAFFFIVYLHMGRGLYYGSYRAPRTLVWTLGVIIFILMIVTAFLGYVLPYGQMSLWGATVITNLMSAIPWIGQDIVEFLWGGFSVNNATLNRFFALHFVLPFVLAALALMHLIALHDSAGSGNPLGVSGNFDRLPFAPYFIFKDLITIFLFILGLSIFVFFAPNILGDSENYVVANPMQTPPAIVPEWYLLPFYAILRSIPNKLLGVIAMFAAIVILLVMPFTDLGRSRGIQFRPLSKIAYYFFIANFLILMKLGAKHVESPFIEFGQISTVLYFSHFVIIVPLVSLIENTLVDLHLHNTLSLKNVF</sequence>
<organism>
    <name type="scientific">Venturia inaequalis</name>
    <name type="common">Apple scab fungus</name>
    <dbReference type="NCBI Taxonomy" id="5025"/>
    <lineage>
        <taxon>Eukaryota</taxon>
        <taxon>Fungi</taxon>
        <taxon>Dikarya</taxon>
        <taxon>Ascomycota</taxon>
        <taxon>Pezizomycotina</taxon>
        <taxon>Dothideomycetes</taxon>
        <taxon>Pleosporomycetidae</taxon>
        <taxon>Venturiales</taxon>
        <taxon>Venturiaceae</taxon>
        <taxon>Venturia</taxon>
    </lineage>
</organism>
<evidence type="ECO:0000250" key="1"/>
<evidence type="ECO:0000250" key="2">
    <source>
        <dbReference type="UniProtKB" id="P00157"/>
    </source>
</evidence>
<evidence type="ECO:0000250" key="3">
    <source>
        <dbReference type="UniProtKB" id="P00163"/>
    </source>
</evidence>
<evidence type="ECO:0000255" key="4">
    <source>
        <dbReference type="PROSITE-ProRule" id="PRU00967"/>
    </source>
</evidence>
<evidence type="ECO:0000255" key="5">
    <source>
        <dbReference type="PROSITE-ProRule" id="PRU00968"/>
    </source>
</evidence>
<reference key="1">
    <citation type="journal article" date="1997" name="Curr. Genet.">
        <title>Characterization of the mitochondrial cytochrome b gene from Venturia inaequalis.</title>
        <authorList>
            <person name="Zheng D."/>
            <person name="Koller W."/>
        </authorList>
    </citation>
    <scope>NUCLEOTIDE SEQUENCE [GENOMIC DNA / MRNA]</scope>
    <source>
        <strain>S-56-88</strain>
    </source>
</reference>
<feature type="chain" id="PRO_0000061767" description="Cytochrome b">
    <location>
        <begin position="1"/>
        <end position="393"/>
    </location>
</feature>
<feature type="transmembrane region" description="Helical" evidence="3">
    <location>
        <begin position="32"/>
        <end position="52"/>
    </location>
</feature>
<feature type="transmembrane region" description="Helical" evidence="3">
    <location>
        <begin position="76"/>
        <end position="98"/>
    </location>
</feature>
<feature type="transmembrane region" description="Helical" evidence="3">
    <location>
        <begin position="113"/>
        <end position="133"/>
    </location>
</feature>
<feature type="transmembrane region" description="Helical" evidence="3">
    <location>
        <begin position="179"/>
        <end position="199"/>
    </location>
</feature>
<feature type="transmembrane region" description="Helical" evidence="3">
    <location>
        <begin position="226"/>
        <end position="246"/>
    </location>
</feature>
<feature type="transmembrane region" description="Helical" evidence="3">
    <location>
        <begin position="290"/>
        <end position="310"/>
    </location>
</feature>
<feature type="transmembrane region" description="Helical" evidence="3">
    <location>
        <begin position="322"/>
        <end position="342"/>
    </location>
</feature>
<feature type="transmembrane region" description="Helical" evidence="3">
    <location>
        <begin position="349"/>
        <end position="369"/>
    </location>
</feature>
<feature type="binding site" description="axial binding residue" evidence="5">
    <location>
        <position position="82"/>
    </location>
    <ligand>
        <name>heme b</name>
        <dbReference type="ChEBI" id="CHEBI:60344"/>
        <label>b562</label>
    </ligand>
    <ligandPart>
        <name>Fe</name>
        <dbReference type="ChEBI" id="CHEBI:18248"/>
    </ligandPart>
</feature>
<feature type="binding site" description="axial binding residue" evidence="5">
    <location>
        <position position="96"/>
    </location>
    <ligand>
        <name>heme b</name>
        <dbReference type="ChEBI" id="CHEBI:60344"/>
        <label>b566</label>
    </ligand>
    <ligandPart>
        <name>Fe</name>
        <dbReference type="ChEBI" id="CHEBI:18248"/>
    </ligandPart>
</feature>
<feature type="binding site" description="axial binding residue" evidence="5">
    <location>
        <position position="183"/>
    </location>
    <ligand>
        <name>heme b</name>
        <dbReference type="ChEBI" id="CHEBI:60344"/>
        <label>b562</label>
    </ligand>
    <ligandPart>
        <name>Fe</name>
        <dbReference type="ChEBI" id="CHEBI:18248"/>
    </ligandPart>
</feature>
<feature type="binding site" description="axial binding residue" evidence="5">
    <location>
        <position position="197"/>
    </location>
    <ligand>
        <name>heme b</name>
        <dbReference type="ChEBI" id="CHEBI:60344"/>
        <label>b566</label>
    </ligand>
    <ligandPart>
        <name>Fe</name>
        <dbReference type="ChEBI" id="CHEBI:18248"/>
    </ligandPart>
</feature>
<feature type="binding site" evidence="2">
    <location>
        <position position="202"/>
    </location>
    <ligand>
        <name>a ubiquinone</name>
        <dbReference type="ChEBI" id="CHEBI:16389"/>
    </ligand>
</feature>
<protein>
    <recommendedName>
        <fullName>Cytochrome b</fullName>
    </recommendedName>
    <alternativeName>
        <fullName>Complex III subunit 3</fullName>
    </alternativeName>
    <alternativeName>
        <fullName>Complex III subunit III</fullName>
    </alternativeName>
    <alternativeName>
        <fullName>Cytochrome b-c1 complex subunit 3</fullName>
    </alternativeName>
    <alternativeName>
        <fullName>Ubiquinol-cytochrome-c reductase complex cytochrome b subunit</fullName>
    </alternativeName>
</protein>
<accession>O48334</accession>